<comment type="similarity">
    <text evidence="2">Belongs to the bacterial ribosomal protein bL34 family.</text>
</comment>
<reference key="1">
    <citation type="journal article" date="1994" name="J. Bacteriol.">
        <title>Cloning and characterization of an autonomous replication sequence from Coxiella burnetii.</title>
        <authorList>
            <person name="Suhan M."/>
            <person name="Chen S.Y."/>
            <person name="Thompson H.A."/>
            <person name="Hoover T.A."/>
            <person name="Hill A."/>
            <person name="Williams J.C."/>
        </authorList>
    </citation>
    <scope>NUCLEOTIDE SEQUENCE [GENOMIC DNA]</scope>
    <source>
        <strain>Nine Mile phase I / Bratislava</strain>
    </source>
</reference>
<reference key="2">
    <citation type="journal article" date="2003" name="Proc. Natl. Acad. Sci. U.S.A.">
        <title>Complete genome sequence of the Q-fever pathogen, Coxiella burnetii.</title>
        <authorList>
            <person name="Seshadri R."/>
            <person name="Paulsen I.T."/>
            <person name="Eisen J.A."/>
            <person name="Read T.D."/>
            <person name="Nelson K.E."/>
            <person name="Nelson W.C."/>
            <person name="Ward N.L."/>
            <person name="Tettelin H."/>
            <person name="Davidsen T.M."/>
            <person name="Beanan M.J."/>
            <person name="DeBoy R.T."/>
            <person name="Daugherty S.C."/>
            <person name="Brinkac L.M."/>
            <person name="Madupu R."/>
            <person name="Dodson R.J."/>
            <person name="Khouri H.M."/>
            <person name="Lee K.H."/>
            <person name="Carty H.A."/>
            <person name="Scanlan D."/>
            <person name="Heinzen R.A."/>
            <person name="Thompson H.A."/>
            <person name="Samuel J.E."/>
            <person name="Fraser C.M."/>
            <person name="Heidelberg J.F."/>
        </authorList>
    </citation>
    <scope>NUCLEOTIDE SEQUENCE [LARGE SCALE GENOMIC DNA]</scope>
    <source>
        <strain>RSA 493 / Nine Mile phase I</strain>
    </source>
</reference>
<accession>P45647</accession>
<proteinExistence type="inferred from homology"/>
<dbReference type="EMBL" id="U10529">
    <property type="protein sequence ID" value="AAA56916.1"/>
    <property type="molecule type" value="Genomic_DNA"/>
</dbReference>
<dbReference type="EMBL" id="AE016828">
    <property type="protein sequence ID" value="AAO91408.1"/>
    <property type="molecule type" value="Genomic_DNA"/>
</dbReference>
<dbReference type="PIR" id="I40651">
    <property type="entry name" value="I40651"/>
</dbReference>
<dbReference type="RefSeq" id="NP_820894.1">
    <property type="nucleotide sequence ID" value="NC_002971.4"/>
</dbReference>
<dbReference type="RefSeq" id="WP_010958535.1">
    <property type="nucleotide sequence ID" value="NZ_CCYB01000002.1"/>
</dbReference>
<dbReference type="SMR" id="P45647"/>
<dbReference type="STRING" id="227377.CBU_1917"/>
<dbReference type="DNASU" id="1209830"/>
<dbReference type="EnsemblBacteria" id="AAO91408">
    <property type="protein sequence ID" value="AAO91408"/>
    <property type="gene ID" value="CBU_1917"/>
</dbReference>
<dbReference type="GeneID" id="1209830"/>
<dbReference type="KEGG" id="cbu:CBU_1917"/>
<dbReference type="PATRIC" id="fig|227377.7.peg.1901"/>
<dbReference type="eggNOG" id="COG0230">
    <property type="taxonomic scope" value="Bacteria"/>
</dbReference>
<dbReference type="HOGENOM" id="CLU_129938_2_0_6"/>
<dbReference type="OrthoDB" id="9804164at2"/>
<dbReference type="Proteomes" id="UP000002671">
    <property type="component" value="Chromosome"/>
</dbReference>
<dbReference type="GO" id="GO:1990904">
    <property type="term" value="C:ribonucleoprotein complex"/>
    <property type="evidence" value="ECO:0007669"/>
    <property type="project" value="UniProtKB-KW"/>
</dbReference>
<dbReference type="GO" id="GO:0005840">
    <property type="term" value="C:ribosome"/>
    <property type="evidence" value="ECO:0007669"/>
    <property type="project" value="UniProtKB-KW"/>
</dbReference>
<dbReference type="GO" id="GO:0003735">
    <property type="term" value="F:structural constituent of ribosome"/>
    <property type="evidence" value="ECO:0007669"/>
    <property type="project" value="InterPro"/>
</dbReference>
<dbReference type="GO" id="GO:0006412">
    <property type="term" value="P:translation"/>
    <property type="evidence" value="ECO:0007669"/>
    <property type="project" value="UniProtKB-UniRule"/>
</dbReference>
<dbReference type="FunFam" id="1.10.287.3980:FF:000001">
    <property type="entry name" value="Mitochondrial ribosomal protein L34"/>
    <property type="match status" value="1"/>
</dbReference>
<dbReference type="Gene3D" id="1.10.287.3980">
    <property type="match status" value="1"/>
</dbReference>
<dbReference type="HAMAP" id="MF_00391">
    <property type="entry name" value="Ribosomal_bL34"/>
    <property type="match status" value="1"/>
</dbReference>
<dbReference type="InterPro" id="IPR000271">
    <property type="entry name" value="Ribosomal_bL34"/>
</dbReference>
<dbReference type="InterPro" id="IPR020939">
    <property type="entry name" value="Ribosomal_bL34_CS"/>
</dbReference>
<dbReference type="NCBIfam" id="TIGR01030">
    <property type="entry name" value="rpmH_bact"/>
    <property type="match status" value="1"/>
</dbReference>
<dbReference type="PANTHER" id="PTHR14503:SF4">
    <property type="entry name" value="LARGE RIBOSOMAL SUBUNIT PROTEIN BL34M"/>
    <property type="match status" value="1"/>
</dbReference>
<dbReference type="PANTHER" id="PTHR14503">
    <property type="entry name" value="MITOCHONDRIAL RIBOSOMAL PROTEIN 34 FAMILY MEMBER"/>
    <property type="match status" value="1"/>
</dbReference>
<dbReference type="Pfam" id="PF00468">
    <property type="entry name" value="Ribosomal_L34"/>
    <property type="match status" value="1"/>
</dbReference>
<dbReference type="PROSITE" id="PS00784">
    <property type="entry name" value="RIBOSOMAL_L34"/>
    <property type="match status" value="1"/>
</dbReference>
<gene>
    <name type="primary">rpmH</name>
    <name type="ordered locus">CBU_1917</name>
</gene>
<evidence type="ECO:0000256" key="1">
    <source>
        <dbReference type="SAM" id="MobiDB-lite"/>
    </source>
</evidence>
<evidence type="ECO:0000305" key="2"/>
<name>RL34_COXBU</name>
<organism>
    <name type="scientific">Coxiella burnetii (strain RSA 493 / Nine Mile phase I)</name>
    <dbReference type="NCBI Taxonomy" id="227377"/>
    <lineage>
        <taxon>Bacteria</taxon>
        <taxon>Pseudomonadati</taxon>
        <taxon>Pseudomonadota</taxon>
        <taxon>Gammaproteobacteria</taxon>
        <taxon>Legionellales</taxon>
        <taxon>Coxiellaceae</taxon>
        <taxon>Coxiella</taxon>
    </lineage>
</organism>
<feature type="chain" id="PRO_0000187374" description="Large ribosomal subunit protein bL34">
    <location>
        <begin position="1"/>
        <end position="44"/>
    </location>
</feature>
<feature type="region of interest" description="Disordered" evidence="1">
    <location>
        <begin position="1"/>
        <end position="44"/>
    </location>
</feature>
<feature type="compositionally biased region" description="Basic residues" evidence="1">
    <location>
        <begin position="1"/>
        <end position="19"/>
    </location>
</feature>
<feature type="compositionally biased region" description="Basic residues" evidence="1">
    <location>
        <begin position="31"/>
        <end position="44"/>
    </location>
</feature>
<protein>
    <recommendedName>
        <fullName evidence="2">Large ribosomal subunit protein bL34</fullName>
    </recommendedName>
    <alternativeName>
        <fullName>50S ribosomal protein L34</fullName>
    </alternativeName>
</protein>
<sequence length="44" mass="5339">MKRTYQPSKQKRNRTHGFRARMATKNGRQVLNRRRAKGRKRLTV</sequence>
<keyword id="KW-1185">Reference proteome</keyword>
<keyword id="KW-0687">Ribonucleoprotein</keyword>
<keyword id="KW-0689">Ribosomal protein</keyword>